<name>Y1843_MYCBO</name>
<reference key="1">
    <citation type="journal article" date="2003" name="Proc. Natl. Acad. Sci. U.S.A.">
        <title>The complete genome sequence of Mycobacterium bovis.</title>
        <authorList>
            <person name="Garnier T."/>
            <person name="Eiglmeier K."/>
            <person name="Camus J.-C."/>
            <person name="Medina N."/>
            <person name="Mansoor H."/>
            <person name="Pryor M."/>
            <person name="Duthoy S."/>
            <person name="Grondin S."/>
            <person name="Lacroix C."/>
            <person name="Monsempe C."/>
            <person name="Simon S."/>
            <person name="Harris B."/>
            <person name="Atkin R."/>
            <person name="Doggett J."/>
            <person name="Mayes R."/>
            <person name="Keating L."/>
            <person name="Wheeler P.R."/>
            <person name="Parkhill J."/>
            <person name="Barrell B.G."/>
            <person name="Cole S.T."/>
            <person name="Gordon S.V."/>
            <person name="Hewinson R.G."/>
        </authorList>
    </citation>
    <scope>NUCLEOTIDE SEQUENCE [LARGE SCALE GENOMIC DNA]</scope>
    <source>
        <strain>ATCC BAA-935 / AF2122/97</strain>
    </source>
</reference>
<reference key="2">
    <citation type="journal article" date="2017" name="Genome Announc.">
        <title>Updated reference genome sequence and annotation of Mycobacterium bovis AF2122/97.</title>
        <authorList>
            <person name="Malone K.M."/>
            <person name="Farrell D."/>
            <person name="Stuber T.P."/>
            <person name="Schubert O.T."/>
            <person name="Aebersold R."/>
            <person name="Robbe-Austerman S."/>
            <person name="Gordon S.V."/>
        </authorList>
    </citation>
    <scope>NUCLEOTIDE SEQUENCE [LARGE SCALE GENOMIC DNA]</scope>
    <scope>GENOME REANNOTATION</scope>
    <source>
        <strain>ATCC BAA-935 / AF2122/97</strain>
    </source>
</reference>
<accession>P64890</accession>
<accession>A0A1R3XZR0</accession>
<accession>Q50620</accession>
<accession>X2BIJ9</accession>
<evidence type="ECO:0000255" key="1"/>
<evidence type="ECO:0000305" key="2"/>
<proteinExistence type="predicted"/>
<keyword id="KW-1003">Cell membrane</keyword>
<keyword id="KW-0472">Membrane</keyword>
<keyword id="KW-1185">Reference proteome</keyword>
<keyword id="KW-0812">Transmembrane</keyword>
<keyword id="KW-1133">Transmembrane helix</keyword>
<protein>
    <recommendedName>
        <fullName>Uncharacterized protein Mb1843c</fullName>
    </recommendedName>
</protein>
<dbReference type="EMBL" id="LT708304">
    <property type="protein sequence ID" value="SIU00447.1"/>
    <property type="molecule type" value="Genomic_DNA"/>
</dbReference>
<dbReference type="RefSeq" id="NP_855495.1">
    <property type="nucleotide sequence ID" value="NC_002945.3"/>
</dbReference>
<dbReference type="RefSeq" id="WP_003409199.1">
    <property type="nucleotide sequence ID" value="NC_002945.4"/>
</dbReference>
<dbReference type="SMR" id="P64890"/>
<dbReference type="KEGG" id="mbo:BQ2027_MB1843C"/>
<dbReference type="PATRIC" id="fig|233413.5.peg.2024"/>
<dbReference type="Proteomes" id="UP000001419">
    <property type="component" value="Chromosome"/>
</dbReference>
<dbReference type="GO" id="GO:0005886">
    <property type="term" value="C:plasma membrane"/>
    <property type="evidence" value="ECO:0007669"/>
    <property type="project" value="UniProtKB-SubCell"/>
</dbReference>
<dbReference type="InterPro" id="IPR025240">
    <property type="entry name" value="DUF4189"/>
</dbReference>
<dbReference type="Pfam" id="PF13827">
    <property type="entry name" value="DUF4189"/>
    <property type="match status" value="1"/>
</dbReference>
<gene>
    <name type="ordered locus">BQ2027_MB1843C</name>
</gene>
<comment type="subcellular location">
    <subcellularLocation>
        <location evidence="2">Cell membrane</location>
        <topology evidence="2">Multi-pass membrane protein</topology>
    </subcellularLocation>
</comment>
<comment type="similarity">
    <text evidence="2">To M.tuberculosis Rv1269c.</text>
</comment>
<organism>
    <name type="scientific">Mycobacterium bovis (strain ATCC BAA-935 / AF2122/97)</name>
    <dbReference type="NCBI Taxonomy" id="233413"/>
    <lineage>
        <taxon>Bacteria</taxon>
        <taxon>Bacillati</taxon>
        <taxon>Actinomycetota</taxon>
        <taxon>Actinomycetes</taxon>
        <taxon>Mycobacteriales</taxon>
        <taxon>Mycobacteriaceae</taxon>
        <taxon>Mycobacterium</taxon>
        <taxon>Mycobacterium tuberculosis complex</taxon>
    </lineage>
</organism>
<sequence>MITNLRRRTAMAAAGLGAALGLGILLVPTVDAHLANGSMSEVMMSEIAGLPIPPIIHYGAIAYAPSGASGKAWHQRTPARAEQVALEKCGDKTCKVVSRFTRCGAVAYNGSKYQGGTGLTRRAAEDDAVNRLEGGRIVNWACN</sequence>
<feature type="chain" id="PRO_0000103899" description="Uncharacterized protein Mb1843c">
    <location>
        <begin position="1"/>
        <end position="143"/>
    </location>
</feature>
<feature type="transmembrane region" description="Helical" evidence="1">
    <location>
        <begin position="10"/>
        <end position="30"/>
    </location>
</feature>
<feature type="transmembrane region" description="Helical" evidence="1">
    <location>
        <begin position="42"/>
        <end position="62"/>
    </location>
</feature>